<sequence length="960" mass="110082">MNKNLRFTQMMIGISTMALSFGSIQTQVSAEETAPYNILQMKPMGTETSKDEIVHATKADETLNFEERLKIGDFSQRPTLVMKRDEIQLKQSYTLAELNKMPNSELIDTLSKISWNQITDLFQFNQDTKAFYQNKERMNVIINELGQRGRTFTKENSKGIETFVEVLRSAFYVGYYNNELSYLKERSFHDKCLPALKAIAKNRNFTLGTAEQDRVVTAYGKLIGNASSDTETVQYAVNVLKHYNDNLSTYVSDYAKGQAVYEIVKGIDYDIQSYLQDTNKQPNETMWYGKIDNFINEVNRIALVGNITNENSWLINNGIYYAGRLGKFHSNPNKGLEVITQAMNLYPRLSGAYFVAVEQMKTNYGGKDYSGNAVDLQKIREEGKQQYLPKTYTFDDGSIVFKTGDKVTEEKIKRLYWAAKEVKAQYHRVIGNDKALEPGNADDVLTIVIYNNPDEYQLNRQLYGYETNNGGIYIEEKGTFFTYERTPKQSIYSLEELFRHEFTHYLQGRYEVPGLFGSGEMYQNERLTWFQEGNAEFFAGSTRTNNVVPRKSMISGLSSDPASRYTVKQTLFSKYGSWDFYKYSFALQSYLYNHQFETFDKLQDLIRANDVKNYDSYRESLSNNTQLNAEYQAYMQQLIDNQDKYNVPKVTNDYLIQHAPKPLAEVKNEIVDVANIKDAKITKYESQFFNTFTVEGKYTGGTSKGESEDWKAMSKQVNQTLEQLSQKGWSGYKTVTAYFVNYRVNAANQFEYDIVFHGVATEEKEKTTTIVNMNGPYSGIVNEEIQFHSDGTKSENGKVISYLWNFGDGTTSTEANPTHVYGEKGTYTVELTVKDSRGKESKEQTKVTVKQDPQTSESYEEEKVLPFNTLVKGNLITPDQTDVYTFNVTDPKEVDISVVNEQNIGMTWVLYHESDMQNYVACGEDEGNVIKGKFAAKPGKYYLNVYKFDDKNGEYSLLVK</sequence>
<proteinExistence type="evidence at protein level"/>
<keyword id="KW-0106">Calcium</keyword>
<keyword id="KW-0378">Hydrolase</keyword>
<keyword id="KW-0479">Metal-binding</keyword>
<keyword id="KW-0482">Metalloprotease</keyword>
<keyword id="KW-0645">Protease</keyword>
<keyword id="KW-1185">Reference proteome</keyword>
<keyword id="KW-0964">Secreted</keyword>
<keyword id="KW-0732">Signal</keyword>
<keyword id="KW-0843">Virulence</keyword>
<keyword id="KW-0862">Zinc</keyword>
<keyword id="KW-0865">Zymogen</keyword>
<comment type="function">
    <text evidence="6">Acts as a true collagenase, which is highly active and efficiently targets native tropocollagen (PubMed:27588686). In vitro, can also cleave gelatin and the synthetic peptide FALGPA (furylacryloyl-Leu-Gly-Pro-Ala) (PubMed:27588686). May contribute to bacterial virulence in endophthalmitis or opportunistic infections via collagen degradation in the host extracellular matrix (ECM) (PubMed:27588686).</text>
</comment>
<comment type="catalytic activity">
    <reaction evidence="6">
        <text>Digestion of native collagen in the triple helical region at Xaa-|-Gly bonds. With synthetic peptides, a preference is shown for Gly at P3 and P1', Pro and Ala at P2 and P2', and hydroxyproline, Ala or Arg at P3'.</text>
        <dbReference type="EC" id="3.4.24.3"/>
    </reaction>
</comment>
<comment type="cofactor">
    <cofactor evidence="2">
        <name>Ca(2+)</name>
        <dbReference type="ChEBI" id="CHEBI:29108"/>
    </cofactor>
</comment>
<comment type="cofactor">
    <cofactor evidence="2">
        <name>Zn(2+)</name>
        <dbReference type="ChEBI" id="CHEBI:29105"/>
    </cofactor>
</comment>
<comment type="subcellular location">
    <subcellularLocation>
        <location evidence="6">Secreted</location>
    </subcellularLocation>
</comment>
<comment type="induction">
    <text evidence="6">Expression is under control of the plcR regulon.</text>
</comment>
<comment type="similarity">
    <text evidence="8">Belongs to the peptidase M9B family. Collagenase subfamily.</text>
</comment>
<name>COLA_BACCR</name>
<feature type="signal peptide" evidence="3">
    <location>
        <begin position="1"/>
        <end position="30"/>
    </location>
</feature>
<feature type="propeptide" id="PRO_0000456570" evidence="9">
    <location>
        <begin position="31"/>
        <end position="92"/>
    </location>
</feature>
<feature type="chain" id="PRO_5004296065" description="Collagenase ColA" evidence="9">
    <location>
        <begin position="93"/>
        <end position="960"/>
    </location>
</feature>
<feature type="domain" description="PKD" evidence="4">
    <location>
        <begin position="768"/>
        <end position="849"/>
    </location>
</feature>
<feature type="region of interest" description="S1 metalloprotease domain" evidence="1">
    <location>
        <begin position="93"/>
        <end position="764"/>
    </location>
</feature>
<feature type="region of interest" description="Activator domain" evidence="1">
    <location>
        <begin position="93"/>
        <end position="365"/>
    </location>
</feature>
<feature type="region of interest" description="Catalytic subdomain" evidence="1">
    <location>
        <begin position="375"/>
        <end position="644"/>
    </location>
</feature>
<feature type="region of interest" description="Helper subdomain" evidence="1">
    <location>
        <begin position="652"/>
        <end position="764"/>
    </location>
</feature>
<feature type="region of interest" description="Disordered" evidence="5">
    <location>
        <begin position="836"/>
        <end position="859"/>
    </location>
</feature>
<feature type="region of interest" description="Collagen-binding domain" evidence="1">
    <location>
        <begin position="852"/>
        <end position="960"/>
    </location>
</feature>
<feature type="compositionally biased region" description="Basic and acidic residues" evidence="5">
    <location>
        <begin position="836"/>
        <end position="845"/>
    </location>
</feature>
<feature type="compositionally biased region" description="Polar residues" evidence="5">
    <location>
        <begin position="846"/>
        <end position="857"/>
    </location>
</feature>
<feature type="active site" evidence="2">
    <location>
        <position position="501"/>
    </location>
</feature>
<feature type="binding site" evidence="2">
    <location>
        <position position="500"/>
    </location>
    <ligand>
        <name>Zn(2+)</name>
        <dbReference type="ChEBI" id="CHEBI:29105"/>
        <note>catalytic</note>
    </ligand>
</feature>
<feature type="binding site" evidence="2">
    <location>
        <position position="504"/>
    </location>
    <ligand>
        <name>Zn(2+)</name>
        <dbReference type="ChEBI" id="CHEBI:29105"/>
        <note>catalytic</note>
    </ligand>
</feature>
<feature type="binding site" evidence="2">
    <location>
        <position position="532"/>
    </location>
    <ligand>
        <name>Zn(2+)</name>
        <dbReference type="ChEBI" id="CHEBI:29105"/>
        <note>catalytic</note>
    </ligand>
</feature>
<feature type="mutagenesis site" description="Proteolytically inactive. Loss of collagenase activity." evidence="6">
    <original>E</original>
    <variation>A</variation>
    <location>
        <position position="501"/>
    </location>
</feature>
<reference key="1">
    <citation type="journal article" date="2003" name="Nature">
        <title>Genome sequence of Bacillus cereus and comparative analysis with Bacillus anthracis.</title>
        <authorList>
            <person name="Ivanova N."/>
            <person name="Sorokin A."/>
            <person name="Anderson I."/>
            <person name="Galleron N."/>
            <person name="Candelon B."/>
            <person name="Kapatral V."/>
            <person name="Bhattacharyya A."/>
            <person name="Reznik G."/>
            <person name="Mikhailova N."/>
            <person name="Lapidus A."/>
            <person name="Chu L."/>
            <person name="Mazur M."/>
            <person name="Goltsman E."/>
            <person name="Larsen N."/>
            <person name="D'Souza M."/>
            <person name="Walunas T."/>
            <person name="Grechkin Y."/>
            <person name="Pusch G."/>
            <person name="Haselkorn R."/>
            <person name="Fonstein M."/>
            <person name="Ehrlich S.D."/>
            <person name="Overbeek R."/>
            <person name="Kyrpides N.C."/>
        </authorList>
    </citation>
    <scope>NUCLEOTIDE SEQUENCE [LARGE SCALE GENOMIC DNA]</scope>
    <source>
        <strain>ATCC 14579 / DSM 31 / CCUG 7414 / JCM 2152 / NBRC 15305 / NCIMB 9373 / NCTC 2599 / NRRL B-3711</strain>
    </source>
</reference>
<reference key="2">
    <citation type="journal article" date="2016" name="PLoS ONE">
        <title>Cloning, purification and characterization of the collagenase ColA expressed by Bacillus cereus ATCC 14579.</title>
        <authorList>
            <person name="Abfalter C.M."/>
            <person name="Schoenauer E."/>
            <person name="Ponnuraj K."/>
            <person name="Huemer M."/>
            <person name="Gadermaier G."/>
            <person name="Regl C."/>
            <person name="Briza P."/>
            <person name="Ferreira F."/>
            <person name="Huber C.G."/>
            <person name="Brandstetter H."/>
            <person name="Posselt G."/>
            <person name="Wessler S."/>
        </authorList>
    </citation>
    <scope>FUNCTION</scope>
    <scope>CATALYTIC ACTIVITY</scope>
    <scope>SUBCELLULAR LOCATION</scope>
    <scope>INDUCTION</scope>
    <scope>MUTAGENESIS OF GLU-501</scope>
    <source>
        <strain>ATCC 14579 / DSM 31 / CCUG 7414 / JCM 2152 / NBRC 15305 / NCIMB 9373 / NCTC 2599 / NRRL B-3711</strain>
    </source>
</reference>
<organism>
    <name type="scientific">Bacillus cereus (strain ATCC 14579 / DSM 31 / CCUG 7414 / JCM 2152 / NBRC 15305 / NCIMB 9373 / NCTC 2599 / NRRL B-3711)</name>
    <dbReference type="NCBI Taxonomy" id="226900"/>
    <lineage>
        <taxon>Bacteria</taxon>
        <taxon>Bacillati</taxon>
        <taxon>Bacillota</taxon>
        <taxon>Bacilli</taxon>
        <taxon>Bacillales</taxon>
        <taxon>Bacillaceae</taxon>
        <taxon>Bacillus</taxon>
        <taxon>Bacillus cereus group</taxon>
    </lineage>
</organism>
<protein>
    <recommendedName>
        <fullName evidence="8">Collagenase ColA</fullName>
        <ecNumber evidence="6">3.4.24.3</ecNumber>
    </recommendedName>
    <alternativeName>
        <fullName evidence="8">Microbial collagenase</fullName>
    </alternativeName>
</protein>
<gene>
    <name evidence="7" type="primary">colA</name>
    <name evidence="10" type="ordered locus">BC_3161</name>
</gene>
<dbReference type="EC" id="3.4.24.3" evidence="6"/>
<dbReference type="EMBL" id="AE016877">
    <property type="protein sequence ID" value="AAP10103.1"/>
    <property type="molecule type" value="Genomic_DNA"/>
</dbReference>
<dbReference type="RefSeq" id="NP_832902.1">
    <property type="nucleotide sequence ID" value="NC_004722.1"/>
</dbReference>
<dbReference type="RefSeq" id="WP_001039012.1">
    <property type="nucleotide sequence ID" value="NC_004722.1"/>
</dbReference>
<dbReference type="SMR" id="Q81BJ6"/>
<dbReference type="BindingDB" id="Q81BJ6"/>
<dbReference type="ChEMBL" id="CHEMBL5169235"/>
<dbReference type="MEROPS" id="M09.005"/>
<dbReference type="KEGG" id="bce:BC3161"/>
<dbReference type="PATRIC" id="fig|226900.8.peg.3242"/>
<dbReference type="HOGENOM" id="CLU_012279_0_0_9"/>
<dbReference type="OrthoDB" id="9798386at2"/>
<dbReference type="Proteomes" id="UP000001417">
    <property type="component" value="Chromosome"/>
</dbReference>
<dbReference type="GO" id="GO:0005576">
    <property type="term" value="C:extracellular region"/>
    <property type="evidence" value="ECO:0007669"/>
    <property type="project" value="UniProtKB-SubCell"/>
</dbReference>
<dbReference type="GO" id="GO:0004222">
    <property type="term" value="F:metalloendopeptidase activity"/>
    <property type="evidence" value="ECO:0007669"/>
    <property type="project" value="UniProtKB-EC"/>
</dbReference>
<dbReference type="GO" id="GO:0008270">
    <property type="term" value="F:zinc ion binding"/>
    <property type="evidence" value="ECO:0007669"/>
    <property type="project" value="InterPro"/>
</dbReference>
<dbReference type="GO" id="GO:0006508">
    <property type="term" value="P:proteolysis"/>
    <property type="evidence" value="ECO:0007669"/>
    <property type="project" value="UniProtKB-KW"/>
</dbReference>
<dbReference type="CDD" id="cd00146">
    <property type="entry name" value="PKD"/>
    <property type="match status" value="1"/>
</dbReference>
<dbReference type="FunFam" id="2.60.40.10:FF:000270">
    <property type="entry name" value="Cell surface protein"/>
    <property type="match status" value="1"/>
</dbReference>
<dbReference type="FunFam" id="1.10.390.20:FF:000001">
    <property type="entry name" value="Microbial collagenase"/>
    <property type="match status" value="1"/>
</dbReference>
<dbReference type="FunFam" id="2.60.120.380:FF:000012">
    <property type="entry name" value="Microbial collagenase"/>
    <property type="match status" value="1"/>
</dbReference>
<dbReference type="FunFam" id="3.30.980.50:FF:000001">
    <property type="entry name" value="Microbial collagenase"/>
    <property type="match status" value="1"/>
</dbReference>
<dbReference type="FunFam" id="3.40.30.160:FF:000001">
    <property type="entry name" value="Microbial collagenase"/>
    <property type="match status" value="1"/>
</dbReference>
<dbReference type="Gene3D" id="1.10.390.20">
    <property type="match status" value="1"/>
</dbReference>
<dbReference type="Gene3D" id="2.60.120.380">
    <property type="match status" value="1"/>
</dbReference>
<dbReference type="Gene3D" id="3.30.980.50">
    <property type="match status" value="1"/>
</dbReference>
<dbReference type="Gene3D" id="3.40.30.160">
    <property type="entry name" value="Collagenase ColT, N-terminal domain"/>
    <property type="match status" value="1"/>
</dbReference>
<dbReference type="Gene3D" id="2.60.40.10">
    <property type="entry name" value="Immunoglobulins"/>
    <property type="match status" value="1"/>
</dbReference>
<dbReference type="InterPro" id="IPR041379">
    <property type="entry name" value="ColG_subdomain"/>
</dbReference>
<dbReference type="InterPro" id="IPR013783">
    <property type="entry name" value="Ig-like_fold"/>
</dbReference>
<dbReference type="InterPro" id="IPR007280">
    <property type="entry name" value="Peptidase_C_arc/bac"/>
</dbReference>
<dbReference type="InterPro" id="IPR013661">
    <property type="entry name" value="Peptidase_M9_N_dom"/>
</dbReference>
<dbReference type="InterPro" id="IPR002169">
    <property type="entry name" value="Peptidase_M9A/M9B"/>
</dbReference>
<dbReference type="InterPro" id="IPR022409">
    <property type="entry name" value="PKD/Chitinase_dom"/>
</dbReference>
<dbReference type="InterPro" id="IPR000601">
    <property type="entry name" value="PKD_dom"/>
</dbReference>
<dbReference type="InterPro" id="IPR035986">
    <property type="entry name" value="PKD_dom_sf"/>
</dbReference>
<dbReference type="PANTHER" id="PTHR13062">
    <property type="entry name" value="COLLAGENASE"/>
    <property type="match status" value="1"/>
</dbReference>
<dbReference type="PANTHER" id="PTHR13062:SF9">
    <property type="entry name" value="MICROBIAL COLLAGENASE"/>
    <property type="match status" value="1"/>
</dbReference>
<dbReference type="Pfam" id="PF18496">
    <property type="entry name" value="ColG_sub"/>
    <property type="match status" value="1"/>
</dbReference>
<dbReference type="Pfam" id="PF01752">
    <property type="entry name" value="Peptidase_M9"/>
    <property type="match status" value="1"/>
</dbReference>
<dbReference type="Pfam" id="PF08453">
    <property type="entry name" value="Peptidase_M9_N"/>
    <property type="match status" value="1"/>
</dbReference>
<dbReference type="Pfam" id="PF18911">
    <property type="entry name" value="PKD_4"/>
    <property type="match status" value="1"/>
</dbReference>
<dbReference type="Pfam" id="PF04151">
    <property type="entry name" value="PPC"/>
    <property type="match status" value="1"/>
</dbReference>
<dbReference type="PRINTS" id="PR00931">
    <property type="entry name" value="MICOLLPTASE"/>
</dbReference>
<dbReference type="SMART" id="SM00089">
    <property type="entry name" value="PKD"/>
    <property type="match status" value="1"/>
</dbReference>
<dbReference type="SUPFAM" id="SSF89260">
    <property type="entry name" value="Collagen-binding domain"/>
    <property type="match status" value="1"/>
</dbReference>
<dbReference type="SUPFAM" id="SSF49299">
    <property type="entry name" value="PKD domain"/>
    <property type="match status" value="1"/>
</dbReference>
<dbReference type="PROSITE" id="PS50093">
    <property type="entry name" value="PKD"/>
    <property type="match status" value="1"/>
</dbReference>
<dbReference type="PROSITE" id="PS00142">
    <property type="entry name" value="ZINC_PROTEASE"/>
    <property type="match status" value="1"/>
</dbReference>
<accession>Q81BJ6</accession>
<evidence type="ECO:0000250" key="1">
    <source>
        <dbReference type="UniProtKB" id="B9J3S4"/>
    </source>
</evidence>
<evidence type="ECO:0000250" key="2">
    <source>
        <dbReference type="UniProtKB" id="Q9X721"/>
    </source>
</evidence>
<evidence type="ECO:0000255" key="3"/>
<evidence type="ECO:0000255" key="4">
    <source>
        <dbReference type="PROSITE-ProRule" id="PRU00151"/>
    </source>
</evidence>
<evidence type="ECO:0000256" key="5">
    <source>
        <dbReference type="SAM" id="MobiDB-lite"/>
    </source>
</evidence>
<evidence type="ECO:0000269" key="6">
    <source>
    </source>
</evidence>
<evidence type="ECO:0000303" key="7">
    <source>
    </source>
</evidence>
<evidence type="ECO:0000305" key="8"/>
<evidence type="ECO:0000305" key="9">
    <source>
    </source>
</evidence>
<evidence type="ECO:0000312" key="10">
    <source>
        <dbReference type="EMBL" id="AAP10103.1"/>
    </source>
</evidence>